<dbReference type="EC" id="4.2.1.9" evidence="1"/>
<dbReference type="EMBL" id="AE008917">
    <property type="protein sequence ID" value="AAL53029.1"/>
    <property type="status" value="ALT_INIT"/>
    <property type="molecule type" value="Genomic_DNA"/>
</dbReference>
<dbReference type="PIR" id="AB3483">
    <property type="entry name" value="AB3483"/>
</dbReference>
<dbReference type="RefSeq" id="WP_004684648.1">
    <property type="nucleotide sequence ID" value="NC_003317.1"/>
</dbReference>
<dbReference type="SMR" id="Q8YEN0"/>
<dbReference type="GeneID" id="29594723"/>
<dbReference type="KEGG" id="bme:BMEI1848"/>
<dbReference type="KEGG" id="bmel:DK63_1641"/>
<dbReference type="PATRIC" id="fig|224914.52.peg.1732"/>
<dbReference type="eggNOG" id="COG0129">
    <property type="taxonomic scope" value="Bacteria"/>
</dbReference>
<dbReference type="PhylomeDB" id="Q8YEN0"/>
<dbReference type="UniPathway" id="UPA00047">
    <property type="reaction ID" value="UER00057"/>
</dbReference>
<dbReference type="UniPathway" id="UPA00049">
    <property type="reaction ID" value="UER00061"/>
</dbReference>
<dbReference type="PRO" id="PR:Q8YEN0"/>
<dbReference type="Proteomes" id="UP000000419">
    <property type="component" value="Chromosome I"/>
</dbReference>
<dbReference type="GO" id="GO:0005829">
    <property type="term" value="C:cytosol"/>
    <property type="evidence" value="ECO:0007669"/>
    <property type="project" value="TreeGrafter"/>
</dbReference>
<dbReference type="GO" id="GO:0051537">
    <property type="term" value="F:2 iron, 2 sulfur cluster binding"/>
    <property type="evidence" value="ECO:0007669"/>
    <property type="project" value="UniProtKB-UniRule"/>
</dbReference>
<dbReference type="GO" id="GO:0004160">
    <property type="term" value="F:dihydroxy-acid dehydratase activity"/>
    <property type="evidence" value="ECO:0007669"/>
    <property type="project" value="UniProtKB-UniRule"/>
</dbReference>
<dbReference type="GO" id="GO:0000287">
    <property type="term" value="F:magnesium ion binding"/>
    <property type="evidence" value="ECO:0007669"/>
    <property type="project" value="UniProtKB-UniRule"/>
</dbReference>
<dbReference type="GO" id="GO:0009097">
    <property type="term" value="P:isoleucine biosynthetic process"/>
    <property type="evidence" value="ECO:0007669"/>
    <property type="project" value="UniProtKB-UniRule"/>
</dbReference>
<dbReference type="GO" id="GO:0009099">
    <property type="term" value="P:L-valine biosynthetic process"/>
    <property type="evidence" value="ECO:0007669"/>
    <property type="project" value="UniProtKB-UniRule"/>
</dbReference>
<dbReference type="FunFam" id="3.50.30.80:FF:000001">
    <property type="entry name" value="Dihydroxy-acid dehydratase"/>
    <property type="match status" value="1"/>
</dbReference>
<dbReference type="Gene3D" id="3.50.30.80">
    <property type="entry name" value="IlvD/EDD C-terminal domain-like"/>
    <property type="match status" value="1"/>
</dbReference>
<dbReference type="HAMAP" id="MF_00012">
    <property type="entry name" value="IlvD"/>
    <property type="match status" value="1"/>
</dbReference>
<dbReference type="InterPro" id="IPR042096">
    <property type="entry name" value="Dihydro-acid_dehy_C"/>
</dbReference>
<dbReference type="InterPro" id="IPR004404">
    <property type="entry name" value="DihydroxyA_deHydtase"/>
</dbReference>
<dbReference type="InterPro" id="IPR020558">
    <property type="entry name" value="DiOHA_6PGluconate_deHydtase_CS"/>
</dbReference>
<dbReference type="InterPro" id="IPR056740">
    <property type="entry name" value="ILV_EDD_C"/>
</dbReference>
<dbReference type="InterPro" id="IPR000581">
    <property type="entry name" value="ILV_EDD_N"/>
</dbReference>
<dbReference type="InterPro" id="IPR037237">
    <property type="entry name" value="IlvD/EDD_N"/>
</dbReference>
<dbReference type="NCBIfam" id="TIGR00110">
    <property type="entry name" value="ilvD"/>
    <property type="match status" value="1"/>
</dbReference>
<dbReference type="NCBIfam" id="NF009103">
    <property type="entry name" value="PRK12448.1"/>
    <property type="match status" value="1"/>
</dbReference>
<dbReference type="PANTHER" id="PTHR43661">
    <property type="entry name" value="D-XYLONATE DEHYDRATASE"/>
    <property type="match status" value="1"/>
</dbReference>
<dbReference type="PANTHER" id="PTHR43661:SF3">
    <property type="entry name" value="D-XYLONATE DEHYDRATASE YAGF-RELATED"/>
    <property type="match status" value="1"/>
</dbReference>
<dbReference type="Pfam" id="PF24877">
    <property type="entry name" value="ILV_EDD_C"/>
    <property type="match status" value="1"/>
</dbReference>
<dbReference type="Pfam" id="PF00920">
    <property type="entry name" value="ILVD_EDD_N"/>
    <property type="match status" value="1"/>
</dbReference>
<dbReference type="SUPFAM" id="SSF143975">
    <property type="entry name" value="IlvD/EDD N-terminal domain-like"/>
    <property type="match status" value="1"/>
</dbReference>
<dbReference type="SUPFAM" id="SSF52016">
    <property type="entry name" value="LeuD/IlvD-like"/>
    <property type="match status" value="1"/>
</dbReference>
<dbReference type="PROSITE" id="PS00886">
    <property type="entry name" value="ILVD_EDD_1"/>
    <property type="match status" value="1"/>
</dbReference>
<dbReference type="PROSITE" id="PS00887">
    <property type="entry name" value="ILVD_EDD_2"/>
    <property type="match status" value="1"/>
</dbReference>
<protein>
    <recommendedName>
        <fullName evidence="1">Dihydroxy-acid dehydratase</fullName>
        <shortName evidence="1">DAD</shortName>
        <ecNumber evidence="1">4.2.1.9</ecNumber>
    </recommendedName>
</protein>
<organism>
    <name type="scientific">Brucella melitensis biotype 1 (strain ATCC 23456 / CCUG 17765 / NCTC 10094 / 16M)</name>
    <dbReference type="NCBI Taxonomy" id="224914"/>
    <lineage>
        <taxon>Bacteria</taxon>
        <taxon>Pseudomonadati</taxon>
        <taxon>Pseudomonadota</taxon>
        <taxon>Alphaproteobacteria</taxon>
        <taxon>Hyphomicrobiales</taxon>
        <taxon>Brucellaceae</taxon>
        <taxon>Brucella/Ochrobactrum group</taxon>
        <taxon>Brucella</taxon>
    </lineage>
</organism>
<reference key="1">
    <citation type="journal article" date="2002" name="Proc. Natl. Acad. Sci. U.S.A.">
        <title>The genome sequence of the facultative intracellular pathogen Brucella melitensis.</title>
        <authorList>
            <person name="DelVecchio V.G."/>
            <person name="Kapatral V."/>
            <person name="Redkar R.J."/>
            <person name="Patra G."/>
            <person name="Mujer C."/>
            <person name="Los T."/>
            <person name="Ivanova N."/>
            <person name="Anderson I."/>
            <person name="Bhattacharyya A."/>
            <person name="Lykidis A."/>
            <person name="Reznik G."/>
            <person name="Jablonski L."/>
            <person name="Larsen N."/>
            <person name="D'Souza M."/>
            <person name="Bernal A."/>
            <person name="Mazur M."/>
            <person name="Goltsman E."/>
            <person name="Selkov E."/>
            <person name="Elzer P.H."/>
            <person name="Hagius S."/>
            <person name="O'Callaghan D."/>
            <person name="Letesson J.-J."/>
            <person name="Haselkorn R."/>
            <person name="Kyrpides N.C."/>
            <person name="Overbeek R."/>
        </authorList>
    </citation>
    <scope>NUCLEOTIDE SEQUENCE [LARGE SCALE GENOMIC DNA]</scope>
    <source>
        <strain>ATCC 23456 / CCUG 17765 / NCTC 10094 / 16M</strain>
    </source>
</reference>
<keyword id="KW-0001">2Fe-2S</keyword>
<keyword id="KW-0028">Amino-acid biosynthesis</keyword>
<keyword id="KW-0100">Branched-chain amino acid biosynthesis</keyword>
<keyword id="KW-0408">Iron</keyword>
<keyword id="KW-0411">Iron-sulfur</keyword>
<keyword id="KW-0456">Lyase</keyword>
<keyword id="KW-0460">Magnesium</keyword>
<keyword id="KW-0479">Metal-binding</keyword>
<accession>Q8YEN0</accession>
<evidence type="ECO:0000255" key="1">
    <source>
        <dbReference type="HAMAP-Rule" id="MF_00012"/>
    </source>
</evidence>
<evidence type="ECO:0000305" key="2"/>
<comment type="function">
    <text evidence="1">Functions in the biosynthesis of branched-chain amino acids. Catalyzes the dehydration of (2R,3R)-2,3-dihydroxy-3-methylpentanoate (2,3-dihydroxy-3-methylvalerate) into 2-oxo-3-methylpentanoate (2-oxo-3-methylvalerate) and of (2R)-2,3-dihydroxy-3-methylbutanoate (2,3-dihydroxyisovalerate) into 2-oxo-3-methylbutanoate (2-oxoisovalerate), the penultimate precursor to L-isoleucine and L-valine, respectively.</text>
</comment>
<comment type="catalytic activity">
    <reaction evidence="1">
        <text>(2R)-2,3-dihydroxy-3-methylbutanoate = 3-methyl-2-oxobutanoate + H2O</text>
        <dbReference type="Rhea" id="RHEA:24809"/>
        <dbReference type="ChEBI" id="CHEBI:11851"/>
        <dbReference type="ChEBI" id="CHEBI:15377"/>
        <dbReference type="ChEBI" id="CHEBI:49072"/>
        <dbReference type="EC" id="4.2.1.9"/>
    </reaction>
    <physiologicalReaction direction="left-to-right" evidence="1">
        <dbReference type="Rhea" id="RHEA:24810"/>
    </physiologicalReaction>
</comment>
<comment type="catalytic activity">
    <reaction evidence="1">
        <text>(2R,3R)-2,3-dihydroxy-3-methylpentanoate = (S)-3-methyl-2-oxopentanoate + H2O</text>
        <dbReference type="Rhea" id="RHEA:27694"/>
        <dbReference type="ChEBI" id="CHEBI:15377"/>
        <dbReference type="ChEBI" id="CHEBI:35146"/>
        <dbReference type="ChEBI" id="CHEBI:49258"/>
        <dbReference type="EC" id="4.2.1.9"/>
    </reaction>
    <physiologicalReaction direction="left-to-right" evidence="1">
        <dbReference type="Rhea" id="RHEA:27695"/>
    </physiologicalReaction>
</comment>
<comment type="cofactor">
    <cofactor evidence="1">
        <name>[2Fe-2S] cluster</name>
        <dbReference type="ChEBI" id="CHEBI:190135"/>
    </cofactor>
    <text evidence="1">Binds 1 [2Fe-2S] cluster per subunit. This cluster acts as a Lewis acid cofactor.</text>
</comment>
<comment type="cofactor">
    <cofactor evidence="1">
        <name>Mg(2+)</name>
        <dbReference type="ChEBI" id="CHEBI:18420"/>
    </cofactor>
</comment>
<comment type="pathway">
    <text evidence="1">Amino-acid biosynthesis; L-isoleucine biosynthesis; L-isoleucine from 2-oxobutanoate: step 3/4.</text>
</comment>
<comment type="pathway">
    <text evidence="1">Amino-acid biosynthesis; L-valine biosynthesis; L-valine from pyruvate: step 3/4.</text>
</comment>
<comment type="subunit">
    <text evidence="1">Homodimer.</text>
</comment>
<comment type="similarity">
    <text evidence="1">Belongs to the IlvD/Edd family.</text>
</comment>
<comment type="sequence caution" evidence="2">
    <conflict type="erroneous initiation">
        <sequence resource="EMBL-CDS" id="AAL53029"/>
    </conflict>
</comment>
<sequence length="611" mass="65291">MPPYRSRTTTHGRNMAGARGLWRATGMKDEDFGKPIIAVVNSFTQFVPGHVHLKDLGQLVAREIESAGGVAKEFNTIAVDDGIAMGHDGMLYSLPSRELIADSVEYMVNAHCADAMVCISNCDKITPGMLMAALRLNIPVVFVSGGPMEAGKVVWEDSVKKLDLVDAMVAAADDHYTDEQVKAIERSACPTCGSCSGMFTANSMNCLTEALGLSLPGNGSTLATHADRKRLFVEAGHLIVDLARRYYEQDDESVLPRSIATFSAFENAMTLDIAMGGSTNTVLHLLAAAQEAEIDFTMADIDRLSRRVPVLCKVAPAVSSVHMEDVHHAGGIMGILGQLDNAGLLTTSIPTVHSETLAKALDHWDVTRTNSEMVHKFYSAAPGGVPTQVAFSQERRFDKVDTDREKGVIHSKEHAFSQDGGLAVLYGNLAEDGCIVKTAGVDDSILKFSGPARIFESQDSAVLGILNGKIKPGDIVLIRYEGPRGGPGMQEMLYPTSYLKSKGLGKACALITDGRFSGGSSGLSIGHVSPEAAEGGTIGLVREGDIIDIDIPNRKIHLAVDDATLAERRAEQDAAGWKPAEERKRKISTALKAYAAMATSAARGAVRKLPD</sequence>
<name>ILVD_BRUME</name>
<gene>
    <name evidence="1" type="primary">ilvD</name>
    <name type="ordered locus">BMEI1848</name>
</gene>
<proteinExistence type="inferred from homology"/>
<feature type="chain" id="PRO_0000103444" description="Dihydroxy-acid dehydratase">
    <location>
        <begin position="1"/>
        <end position="611"/>
    </location>
</feature>
<feature type="active site" description="Proton acceptor" evidence="1">
    <location>
        <position position="517"/>
    </location>
</feature>
<feature type="binding site" evidence="1">
    <location>
        <position position="81"/>
    </location>
    <ligand>
        <name>Mg(2+)</name>
        <dbReference type="ChEBI" id="CHEBI:18420"/>
    </ligand>
</feature>
<feature type="binding site" evidence="1">
    <location>
        <position position="122"/>
    </location>
    <ligand>
        <name>[2Fe-2S] cluster</name>
        <dbReference type="ChEBI" id="CHEBI:190135"/>
    </ligand>
</feature>
<feature type="binding site" evidence="1">
    <location>
        <position position="123"/>
    </location>
    <ligand>
        <name>Mg(2+)</name>
        <dbReference type="ChEBI" id="CHEBI:18420"/>
    </ligand>
</feature>
<feature type="binding site" description="via carbamate group" evidence="1">
    <location>
        <position position="124"/>
    </location>
    <ligand>
        <name>Mg(2+)</name>
        <dbReference type="ChEBI" id="CHEBI:18420"/>
    </ligand>
</feature>
<feature type="binding site" evidence="1">
    <location>
        <position position="195"/>
    </location>
    <ligand>
        <name>[2Fe-2S] cluster</name>
        <dbReference type="ChEBI" id="CHEBI:190135"/>
    </ligand>
</feature>
<feature type="binding site" evidence="1">
    <location>
        <position position="491"/>
    </location>
    <ligand>
        <name>Mg(2+)</name>
        <dbReference type="ChEBI" id="CHEBI:18420"/>
    </ligand>
</feature>
<feature type="modified residue" description="N6-carboxylysine" evidence="1">
    <location>
        <position position="124"/>
    </location>
</feature>